<protein>
    <recommendedName>
        <fullName evidence="17">E3 ubiquitin-protein ligase RNF125</fullName>
        <ecNumber evidence="5 6 7 10 11 13 14">2.3.2.27</ecNumber>
    </recommendedName>
    <alternativeName>
        <fullName evidence="18">RING finger protein 125</fullName>
    </alternativeName>
    <alternativeName>
        <fullName evidence="15">T-cell RING activation protein 1</fullName>
        <shortName evidence="15">TRAC-1</shortName>
    </alternativeName>
</protein>
<dbReference type="EC" id="2.3.2.27" evidence="5 6 7 10 11 13 14"/>
<dbReference type="EMBL" id="AK000463">
    <property type="protein sequence ID" value="BAA91182.1"/>
    <property type="molecule type" value="mRNA"/>
</dbReference>
<dbReference type="EMBL" id="BC012021">
    <property type="protein sequence ID" value="AAH12021.1"/>
    <property type="molecule type" value="mRNA"/>
</dbReference>
<dbReference type="CCDS" id="CCDS11902.1"/>
<dbReference type="RefSeq" id="NP_060301.2">
    <property type="nucleotide sequence ID" value="NM_017831.3"/>
</dbReference>
<dbReference type="PDB" id="5DKA">
    <property type="method" value="X-ray"/>
    <property type="resolution" value="1.55 A"/>
    <property type="chains" value="A/B=1-232"/>
</dbReference>
<dbReference type="PDB" id="8GBQ">
    <property type="method" value="X-ray"/>
    <property type="resolution" value="1.74 A"/>
    <property type="chains" value="B=32-127"/>
</dbReference>
<dbReference type="PDB" id="8GCB">
    <property type="method" value="X-ray"/>
    <property type="resolution" value="2.39 A"/>
    <property type="chains" value="B=32-127"/>
</dbReference>
<dbReference type="PDBsum" id="5DKA"/>
<dbReference type="PDBsum" id="8GBQ"/>
<dbReference type="PDBsum" id="8GCB"/>
<dbReference type="SMR" id="Q96EQ8"/>
<dbReference type="BioGRID" id="120281">
    <property type="interactions" value="43"/>
</dbReference>
<dbReference type="DIP" id="DIP-52778N"/>
<dbReference type="ELM" id="Q96EQ8"/>
<dbReference type="FunCoup" id="Q96EQ8">
    <property type="interactions" value="246"/>
</dbReference>
<dbReference type="IntAct" id="Q96EQ8">
    <property type="interactions" value="24"/>
</dbReference>
<dbReference type="MINT" id="Q96EQ8"/>
<dbReference type="STRING" id="9606.ENSP00000217740"/>
<dbReference type="iPTMnet" id="Q96EQ8"/>
<dbReference type="PhosphoSitePlus" id="Q96EQ8"/>
<dbReference type="BioMuta" id="RNF125"/>
<dbReference type="DMDM" id="143811449"/>
<dbReference type="jPOST" id="Q96EQ8"/>
<dbReference type="MassIVE" id="Q96EQ8"/>
<dbReference type="PaxDb" id="9606-ENSP00000217740"/>
<dbReference type="PeptideAtlas" id="Q96EQ8"/>
<dbReference type="ProteomicsDB" id="76441"/>
<dbReference type="Antibodypedia" id="22188">
    <property type="antibodies" value="206 antibodies from 30 providers"/>
</dbReference>
<dbReference type="DNASU" id="54941"/>
<dbReference type="Ensembl" id="ENST00000217740.4">
    <property type="protein sequence ID" value="ENSP00000217740.3"/>
    <property type="gene ID" value="ENSG00000101695.10"/>
</dbReference>
<dbReference type="GeneID" id="54941"/>
<dbReference type="KEGG" id="hsa:54941"/>
<dbReference type="MANE-Select" id="ENST00000217740.4">
    <property type="protein sequence ID" value="ENSP00000217740.3"/>
    <property type="RefSeq nucleotide sequence ID" value="NM_017831.4"/>
    <property type="RefSeq protein sequence ID" value="NP_060301.2"/>
</dbReference>
<dbReference type="UCSC" id="uc002kxf.2">
    <property type="organism name" value="human"/>
</dbReference>
<dbReference type="AGR" id="HGNC:21150"/>
<dbReference type="CTD" id="54941"/>
<dbReference type="DisGeNET" id="54941"/>
<dbReference type="GeneCards" id="RNF125"/>
<dbReference type="HGNC" id="HGNC:21150">
    <property type="gene designation" value="RNF125"/>
</dbReference>
<dbReference type="HPA" id="ENSG00000101695">
    <property type="expression patterns" value="Tissue enhanced (bone)"/>
</dbReference>
<dbReference type="MalaCards" id="RNF125"/>
<dbReference type="MIM" id="610432">
    <property type="type" value="gene"/>
</dbReference>
<dbReference type="MIM" id="616260">
    <property type="type" value="phenotype"/>
</dbReference>
<dbReference type="neXtProt" id="NX_Q96EQ8"/>
<dbReference type="OpenTargets" id="ENSG00000101695"/>
<dbReference type="PharmGKB" id="PA134950383"/>
<dbReference type="VEuPathDB" id="HostDB:ENSG00000101695"/>
<dbReference type="eggNOG" id="ENOG502RYGV">
    <property type="taxonomic scope" value="Eukaryota"/>
</dbReference>
<dbReference type="GeneTree" id="ENSGT00950000182909"/>
<dbReference type="HOGENOM" id="CLU_092448_2_0_1"/>
<dbReference type="InParanoid" id="Q96EQ8"/>
<dbReference type="OMA" id="FKNCTEC"/>
<dbReference type="OrthoDB" id="9049620at2759"/>
<dbReference type="PAN-GO" id="Q96EQ8">
    <property type="GO annotations" value="4 GO annotations based on evolutionary models"/>
</dbReference>
<dbReference type="PhylomeDB" id="Q96EQ8"/>
<dbReference type="TreeFam" id="TF331012"/>
<dbReference type="PathwayCommons" id="Q96EQ8"/>
<dbReference type="Reactome" id="R-HSA-936440">
    <property type="pathway name" value="Negative regulators of DDX58/IFIH1 signaling"/>
</dbReference>
<dbReference type="SignaLink" id="Q96EQ8"/>
<dbReference type="SIGNOR" id="Q96EQ8"/>
<dbReference type="UniPathway" id="UPA00143"/>
<dbReference type="BioGRID-ORCS" id="54941">
    <property type="hits" value="14 hits in 1190 CRISPR screens"/>
</dbReference>
<dbReference type="ChiTaRS" id="RNF125">
    <property type="organism name" value="human"/>
</dbReference>
<dbReference type="GeneWiki" id="RNF125"/>
<dbReference type="GenomeRNAi" id="54941"/>
<dbReference type="Pharos" id="Q96EQ8">
    <property type="development level" value="Tbio"/>
</dbReference>
<dbReference type="PRO" id="PR:Q96EQ8"/>
<dbReference type="Proteomes" id="UP000005640">
    <property type="component" value="Chromosome 18"/>
</dbReference>
<dbReference type="RNAct" id="Q96EQ8">
    <property type="molecule type" value="protein"/>
</dbReference>
<dbReference type="Bgee" id="ENSG00000101695">
    <property type="expression patterns" value="Expressed in jejunal mucosa and 184 other cell types or tissues"/>
</dbReference>
<dbReference type="ExpressionAtlas" id="Q96EQ8">
    <property type="expression patterns" value="baseline and differential"/>
</dbReference>
<dbReference type="GO" id="GO:0000139">
    <property type="term" value="C:Golgi membrane"/>
    <property type="evidence" value="ECO:0000314"/>
    <property type="project" value="UniProtKB"/>
</dbReference>
<dbReference type="GO" id="GO:0043231">
    <property type="term" value="C:intracellular membrane-bounded organelle"/>
    <property type="evidence" value="ECO:0000314"/>
    <property type="project" value="UniProtKB"/>
</dbReference>
<dbReference type="GO" id="GO:0034098">
    <property type="term" value="C:VCP-NPL4-UFD1 AAA ATPase complex"/>
    <property type="evidence" value="ECO:0000314"/>
    <property type="project" value="UniProtKB"/>
</dbReference>
<dbReference type="GO" id="GO:0002039">
    <property type="term" value="F:p53 binding"/>
    <property type="evidence" value="ECO:0000353"/>
    <property type="project" value="UniProtKB"/>
</dbReference>
<dbReference type="GO" id="GO:0031624">
    <property type="term" value="F:ubiquitin conjugating enzyme binding"/>
    <property type="evidence" value="ECO:0000353"/>
    <property type="project" value="UniProtKB"/>
</dbReference>
<dbReference type="GO" id="GO:0061630">
    <property type="term" value="F:ubiquitin protein ligase activity"/>
    <property type="evidence" value="ECO:0000314"/>
    <property type="project" value="UniProtKB"/>
</dbReference>
<dbReference type="GO" id="GO:0008270">
    <property type="term" value="F:zinc ion binding"/>
    <property type="evidence" value="ECO:0000314"/>
    <property type="project" value="UniProtKB"/>
</dbReference>
<dbReference type="GO" id="GO:0002250">
    <property type="term" value="P:adaptive immune response"/>
    <property type="evidence" value="ECO:0007669"/>
    <property type="project" value="UniProtKB-KW"/>
</dbReference>
<dbReference type="GO" id="GO:1990830">
    <property type="term" value="P:cellular response to leukemia inhibitory factor"/>
    <property type="evidence" value="ECO:0007669"/>
    <property type="project" value="Ensembl"/>
</dbReference>
<dbReference type="GO" id="GO:0039536">
    <property type="term" value="P:negative regulation of RIG-I signaling pathway"/>
    <property type="evidence" value="ECO:0000314"/>
    <property type="project" value="UniProtKB"/>
</dbReference>
<dbReference type="GO" id="GO:0032480">
    <property type="term" value="P:negative regulation of type I interferon production"/>
    <property type="evidence" value="ECO:0000314"/>
    <property type="project" value="UniProtKB"/>
</dbReference>
<dbReference type="GO" id="GO:0000209">
    <property type="term" value="P:protein polyubiquitination"/>
    <property type="evidence" value="ECO:0000314"/>
    <property type="project" value="UniProtKB"/>
</dbReference>
<dbReference type="GO" id="GO:0006511">
    <property type="term" value="P:ubiquitin-dependent protein catabolic process"/>
    <property type="evidence" value="ECO:0000314"/>
    <property type="project" value="UniProtKB"/>
</dbReference>
<dbReference type="CDD" id="cd16542">
    <property type="entry name" value="RING-HC_RNF125"/>
    <property type="match status" value="1"/>
</dbReference>
<dbReference type="FunFam" id="3.30.40.10:FF:000324">
    <property type="entry name" value="E3 ubiquitin-protein ligase RNF125 isoform X2"/>
    <property type="match status" value="1"/>
</dbReference>
<dbReference type="Gene3D" id="3.30.40.10">
    <property type="entry name" value="Zinc/RING finger domain, C3HC4 (zinc finger)"/>
    <property type="match status" value="1"/>
</dbReference>
<dbReference type="InterPro" id="IPR008598">
    <property type="entry name" value="Di19_Zn-bd"/>
</dbReference>
<dbReference type="InterPro" id="IPR051438">
    <property type="entry name" value="RNF_E3_ubiq-protein_ligase"/>
</dbReference>
<dbReference type="InterPro" id="IPR034734">
    <property type="entry name" value="ZF_C2HC_RNF"/>
</dbReference>
<dbReference type="InterPro" id="IPR001841">
    <property type="entry name" value="Znf_RING"/>
</dbReference>
<dbReference type="InterPro" id="IPR013083">
    <property type="entry name" value="Znf_RING/FYVE/PHD"/>
</dbReference>
<dbReference type="InterPro" id="IPR017907">
    <property type="entry name" value="Znf_RING_CS"/>
</dbReference>
<dbReference type="PANTHER" id="PTHR46016:SF2">
    <property type="entry name" value="E3 UBIQUITIN-PROTEIN LIGASE RNF125"/>
    <property type="match status" value="1"/>
</dbReference>
<dbReference type="PANTHER" id="PTHR46016">
    <property type="entry name" value="ZINC FINGER, RING/FYVE/PHD-TYPE"/>
    <property type="match status" value="1"/>
</dbReference>
<dbReference type="Pfam" id="PF13923">
    <property type="entry name" value="zf-C3HC4_2"/>
    <property type="match status" value="1"/>
</dbReference>
<dbReference type="Pfam" id="PF05605">
    <property type="entry name" value="zf-Di19"/>
    <property type="match status" value="1"/>
</dbReference>
<dbReference type="Pfam" id="PF18574">
    <property type="entry name" value="zf_C2HC_14"/>
    <property type="match status" value="1"/>
</dbReference>
<dbReference type="SMART" id="SM00184">
    <property type="entry name" value="RING"/>
    <property type="match status" value="1"/>
</dbReference>
<dbReference type="SUPFAM" id="SSF57850">
    <property type="entry name" value="RING/U-box"/>
    <property type="match status" value="1"/>
</dbReference>
<dbReference type="PROSITE" id="PS51803">
    <property type="entry name" value="ZF_C2HC_RNF"/>
    <property type="match status" value="1"/>
</dbReference>
<dbReference type="PROSITE" id="PS00518">
    <property type="entry name" value="ZF_RING_1"/>
    <property type="match status" value="1"/>
</dbReference>
<dbReference type="PROSITE" id="PS50089">
    <property type="entry name" value="ZF_RING_2"/>
    <property type="match status" value="1"/>
</dbReference>
<proteinExistence type="evidence at protein level"/>
<evidence type="ECO:0000255" key="1">
    <source>
        <dbReference type="PROSITE-ProRule" id="PRU00175"/>
    </source>
</evidence>
<evidence type="ECO:0000255" key="2">
    <source>
        <dbReference type="PROSITE-ProRule" id="PRU01144"/>
    </source>
</evidence>
<evidence type="ECO:0000256" key="3">
    <source>
        <dbReference type="SAM" id="MobiDB-lite"/>
    </source>
</evidence>
<evidence type="ECO:0000269" key="4">
    <source>
    </source>
</evidence>
<evidence type="ECO:0000269" key="5">
    <source>
    </source>
</evidence>
<evidence type="ECO:0000269" key="6">
    <source>
    </source>
</evidence>
<evidence type="ECO:0000269" key="7">
    <source>
    </source>
</evidence>
<evidence type="ECO:0000269" key="8">
    <source>
    </source>
</evidence>
<evidence type="ECO:0000269" key="9">
    <source>
    </source>
</evidence>
<evidence type="ECO:0000269" key="10">
    <source>
    </source>
</evidence>
<evidence type="ECO:0000269" key="11">
    <source>
    </source>
</evidence>
<evidence type="ECO:0000269" key="12">
    <source>
    </source>
</evidence>
<evidence type="ECO:0000269" key="13">
    <source>
    </source>
</evidence>
<evidence type="ECO:0000269" key="14">
    <source>
    </source>
</evidence>
<evidence type="ECO:0000303" key="15">
    <source>
    </source>
</evidence>
<evidence type="ECO:0000303" key="16">
    <source>
    </source>
</evidence>
<evidence type="ECO:0000305" key="17"/>
<evidence type="ECO:0000312" key="18">
    <source>
        <dbReference type="HGNC" id="HGNC:21150"/>
    </source>
</evidence>
<evidence type="ECO:0007744" key="19">
    <source>
        <dbReference type="PDB" id="5DKA"/>
    </source>
</evidence>
<evidence type="ECO:0007829" key="20">
    <source>
        <dbReference type="PDB" id="5DKA"/>
    </source>
</evidence>
<reference key="1">
    <citation type="journal article" date="2004" name="Nat. Genet.">
        <title>Complete sequencing and characterization of 21,243 full-length human cDNAs.</title>
        <authorList>
            <person name="Ota T."/>
            <person name="Suzuki Y."/>
            <person name="Nishikawa T."/>
            <person name="Otsuki T."/>
            <person name="Sugiyama T."/>
            <person name="Irie R."/>
            <person name="Wakamatsu A."/>
            <person name="Hayashi K."/>
            <person name="Sato H."/>
            <person name="Nagai K."/>
            <person name="Kimura K."/>
            <person name="Makita H."/>
            <person name="Sekine M."/>
            <person name="Obayashi M."/>
            <person name="Nishi T."/>
            <person name="Shibahara T."/>
            <person name="Tanaka T."/>
            <person name="Ishii S."/>
            <person name="Yamamoto J."/>
            <person name="Saito K."/>
            <person name="Kawai Y."/>
            <person name="Isono Y."/>
            <person name="Nakamura Y."/>
            <person name="Nagahari K."/>
            <person name="Murakami K."/>
            <person name="Yasuda T."/>
            <person name="Iwayanagi T."/>
            <person name="Wagatsuma M."/>
            <person name="Shiratori A."/>
            <person name="Sudo H."/>
            <person name="Hosoiri T."/>
            <person name="Kaku Y."/>
            <person name="Kodaira H."/>
            <person name="Kondo H."/>
            <person name="Sugawara M."/>
            <person name="Takahashi M."/>
            <person name="Kanda K."/>
            <person name="Yokoi T."/>
            <person name="Furuya T."/>
            <person name="Kikkawa E."/>
            <person name="Omura Y."/>
            <person name="Abe K."/>
            <person name="Kamihara K."/>
            <person name="Katsuta N."/>
            <person name="Sato K."/>
            <person name="Tanikawa M."/>
            <person name="Yamazaki M."/>
            <person name="Ninomiya K."/>
            <person name="Ishibashi T."/>
            <person name="Yamashita H."/>
            <person name="Murakawa K."/>
            <person name="Fujimori K."/>
            <person name="Tanai H."/>
            <person name="Kimata M."/>
            <person name="Watanabe M."/>
            <person name="Hiraoka S."/>
            <person name="Chiba Y."/>
            <person name="Ishida S."/>
            <person name="Ono Y."/>
            <person name="Takiguchi S."/>
            <person name="Watanabe S."/>
            <person name="Yosida M."/>
            <person name="Hotuta T."/>
            <person name="Kusano J."/>
            <person name="Kanehori K."/>
            <person name="Takahashi-Fujii A."/>
            <person name="Hara H."/>
            <person name="Tanase T.-O."/>
            <person name="Nomura Y."/>
            <person name="Togiya S."/>
            <person name="Komai F."/>
            <person name="Hara R."/>
            <person name="Takeuchi K."/>
            <person name="Arita M."/>
            <person name="Imose N."/>
            <person name="Musashino K."/>
            <person name="Yuuki H."/>
            <person name="Oshima A."/>
            <person name="Sasaki N."/>
            <person name="Aotsuka S."/>
            <person name="Yoshikawa Y."/>
            <person name="Matsunawa H."/>
            <person name="Ichihara T."/>
            <person name="Shiohata N."/>
            <person name="Sano S."/>
            <person name="Moriya S."/>
            <person name="Momiyama H."/>
            <person name="Satoh N."/>
            <person name="Takami S."/>
            <person name="Terashima Y."/>
            <person name="Suzuki O."/>
            <person name="Nakagawa S."/>
            <person name="Senoh A."/>
            <person name="Mizoguchi H."/>
            <person name="Goto Y."/>
            <person name="Shimizu F."/>
            <person name="Wakebe H."/>
            <person name="Hishigaki H."/>
            <person name="Watanabe T."/>
            <person name="Sugiyama A."/>
            <person name="Takemoto M."/>
            <person name="Kawakami B."/>
            <person name="Yamazaki M."/>
            <person name="Watanabe K."/>
            <person name="Kumagai A."/>
            <person name="Itakura S."/>
            <person name="Fukuzumi Y."/>
            <person name="Fujimori Y."/>
            <person name="Komiyama M."/>
            <person name="Tashiro H."/>
            <person name="Tanigami A."/>
            <person name="Fujiwara T."/>
            <person name="Ono T."/>
            <person name="Yamada K."/>
            <person name="Fujii Y."/>
            <person name="Ozaki K."/>
            <person name="Hirao M."/>
            <person name="Ohmori Y."/>
            <person name="Kawabata A."/>
            <person name="Hikiji T."/>
            <person name="Kobatake N."/>
            <person name="Inagaki H."/>
            <person name="Ikema Y."/>
            <person name="Okamoto S."/>
            <person name="Okitani R."/>
            <person name="Kawakami T."/>
            <person name="Noguchi S."/>
            <person name="Itoh T."/>
            <person name="Shigeta K."/>
            <person name="Senba T."/>
            <person name="Matsumura K."/>
            <person name="Nakajima Y."/>
            <person name="Mizuno T."/>
            <person name="Morinaga M."/>
            <person name="Sasaki M."/>
            <person name="Togashi T."/>
            <person name="Oyama M."/>
            <person name="Hata H."/>
            <person name="Watanabe M."/>
            <person name="Komatsu T."/>
            <person name="Mizushima-Sugano J."/>
            <person name="Satoh T."/>
            <person name="Shirai Y."/>
            <person name="Takahashi Y."/>
            <person name="Nakagawa K."/>
            <person name="Okumura K."/>
            <person name="Nagase T."/>
            <person name="Nomura N."/>
            <person name="Kikuchi H."/>
            <person name="Masuho Y."/>
            <person name="Yamashita R."/>
            <person name="Nakai K."/>
            <person name="Yada T."/>
            <person name="Nakamura Y."/>
            <person name="Ohara O."/>
            <person name="Isogai T."/>
            <person name="Sugano S."/>
        </authorList>
    </citation>
    <scope>NUCLEOTIDE SEQUENCE [LARGE SCALE MRNA]</scope>
    <source>
        <tissue>Carcinoma</tissue>
    </source>
</reference>
<reference key="2">
    <citation type="journal article" date="2004" name="Genome Res.">
        <title>The status, quality, and expansion of the NIH full-length cDNA project: the Mammalian Gene Collection (MGC).</title>
        <authorList>
            <consortium name="The MGC Project Team"/>
        </authorList>
    </citation>
    <scope>NUCLEOTIDE SEQUENCE [LARGE SCALE MRNA]</scope>
    <source>
        <tissue>Testis</tissue>
    </source>
</reference>
<reference key="3">
    <citation type="journal article" date="2003" name="J. Biol.">
        <title>Systematic identification of regulatory proteins critical for T-cell activation.</title>
        <authorList>
            <person name="Chu P."/>
            <person name="Pardo J."/>
            <person name="Zhao H."/>
            <person name="Li C.C."/>
            <person name="Pali E."/>
            <person name="Shen M.M."/>
            <person name="Qu K."/>
            <person name="Yu S.X."/>
            <person name="Huang B.C.B."/>
            <person name="Yu P."/>
            <person name="Masuda E.S."/>
            <person name="Molineaux S.M."/>
            <person name="Kolbinger F."/>
            <person name="Aversa G."/>
            <person name="de Vries J."/>
            <person name="Payan D.G."/>
            <person name="Liao X.C."/>
        </authorList>
    </citation>
    <scope>IDENTIFICATION</scope>
    <scope>TISSUE SPECIFICITY</scope>
</reference>
<reference key="4">
    <citation type="journal article" date="2005" name="J. Immunol.">
        <title>A novel E3 ubiquitin ligase TRAC-1 positively regulates T cell activation.</title>
        <authorList>
            <person name="Zhao H."/>
            <person name="Li C.C."/>
            <person name="Pardo J."/>
            <person name="Chu P.C."/>
            <person name="Liao C.X."/>
            <person name="Huang J."/>
            <person name="Dong J.G."/>
            <person name="Zhou X."/>
            <person name="Huang Q."/>
            <person name="Huang B.C.B."/>
            <person name="Bennett M.K."/>
            <person name="Molineaux S.M."/>
            <person name="Lu H."/>
            <person name="Daniel-Issakani S."/>
            <person name="Payan D.G."/>
            <person name="Masuda E.S."/>
        </authorList>
    </citation>
    <scope>FUNCTION</scope>
    <scope>CATALYTIC ACTIVITY</scope>
    <scope>TISSUE SPECIFICITY</scope>
    <scope>MUTAGENESIS OF GLY-2; CYS-37; CYS-40; HIS-54; CYS-57; CYS-72 AND CYS-75</scope>
</reference>
<reference key="5">
    <citation type="journal article" date="2007" name="Proc. Natl. Acad. Sci. U.S.A.">
        <title>Negative regulation of the RIG-I signaling by the ubiquitin ligase RNF125.</title>
        <authorList>
            <person name="Arimoto K."/>
            <person name="Takahashi H."/>
            <person name="Hishiki T."/>
            <person name="Konishi H."/>
            <person name="Fujita T."/>
            <person name="Shimotohno K."/>
        </authorList>
    </citation>
    <scope>FUNCTION</scope>
    <scope>CATALYTIC ACTIVITY</scope>
    <scope>MUTAGENESIS OF CYS-72 AND CYS-75</scope>
</reference>
<reference key="6">
    <citation type="journal article" date="2007" name="Virology">
        <title>The RING finger ubiquitin ligase RNF125/TRAC-1 down-modulates HIV-1 replication in primary human peripheral blood mononuclear cells.</title>
        <authorList>
            <person name="Shoji-Kawata S."/>
            <person name="Zhong Q."/>
            <person name="Kameoka M."/>
            <person name="Iwabu Y."/>
            <person name="Sapsutthipas S."/>
            <person name="Luftig R.B."/>
            <person name="Ikuta K."/>
        </authorList>
    </citation>
    <scope>FUNCTION</scope>
    <scope>MUTAGENESIS OF CYS-37 AND CYS-40</scope>
</reference>
<reference key="7">
    <citation type="journal article" date="2008" name="Biochem. J.">
        <title>T-cell regulator RNF125/TRAC-1 belongs to a novel family of ubiquitin ligases with zinc fingers and a ubiquitin-binding domain.</title>
        <authorList>
            <person name="Giannini A.L."/>
            <person name="Gao Y."/>
            <person name="Bijlmakers M.J."/>
        </authorList>
    </citation>
    <scope>SUBCELLULAR LOCATION</scope>
    <scope>AUTOUBIQUITINATION</scope>
    <scope>MYRISTOYLATION AT GLY-2</scope>
    <scope>MUTAGENESIS OF GLY-2; CYS-37; CYS-40; VAL-217 AND SER-221</scope>
</reference>
<reference key="8">
    <citation type="journal article" date="2014" name="Hum. Mutat.">
        <title>A new overgrowth syndrome is due to mutations in RNF125.</title>
        <authorList>
            <consortium name="SOGRI Consortium"/>
            <person name="Tenorio J."/>
            <person name="Mansilla A."/>
            <person name="Valencia M."/>
            <person name="Martinez-Glez V."/>
            <person name="Romanelli V."/>
            <person name="Arias P."/>
            <person name="Castrejon N."/>
            <person name="Poletta F."/>
            <person name="Guillen-Navarro E."/>
            <person name="Gordo G."/>
            <person name="Mansilla E."/>
            <person name="Garcia-Santiago F."/>
            <person name="Gonzalez-Casado I."/>
            <person name="Vallespin E."/>
            <person name="Palomares M."/>
            <person name="Mori M.A."/>
            <person name="Santos-Simarro F."/>
            <person name="Garcia-Minaur S."/>
            <person name="Fernandez L."/>
            <person name="Mena R."/>
            <person name="Benito-Sanz S."/>
            <person name="del Pozo A."/>
            <person name="Silla J.C."/>
            <person name="Ibanez K."/>
            <person name="Lopez-Granados E."/>
            <person name="Martin-Trujillo A."/>
            <person name="Montaner D."/>
            <person name="Heath K.E."/>
            <person name="Campos-Barros A."/>
            <person name="Dopazo J."/>
            <person name="Nevado J."/>
            <person name="Monk D."/>
            <person name="Ruiz-Perez V.L."/>
            <person name="Lapunzina P."/>
        </authorList>
    </citation>
    <scope>INVOLVEMENT IN TNORS</scope>
    <scope>VARIANTS TNORS ILE-112; LEU-163 AND CYS-174</scope>
</reference>
<reference key="9">
    <citation type="journal article" date="2015" name="Cell. Physiol. Biochem.">
        <title>RNF125 is a ubiquitin-protein ligase that promotes p53 degradation.</title>
        <authorList>
            <person name="Yang L."/>
            <person name="Zhou B."/>
            <person name="Li X."/>
            <person name="Lu Z."/>
            <person name="Li W."/>
            <person name="Huo X."/>
            <person name="Miao Z."/>
        </authorList>
    </citation>
    <scope>FUNCTION</scope>
    <scope>CATALYTIC ACTIVITY</scope>
    <scope>MUTAGENESIS OF CYS-72 AND CYS-75</scope>
</reference>
<reference key="10">
    <citation type="journal article" date="2015" name="Cell Rep.">
        <title>Downregulation of the ubiquitin ligase RNF125 underlies resistance of melanoma cells to BRAF inhibitors via JAK1 deregulation.</title>
        <authorList>
            <person name="Kim H."/>
            <person name="Frederick D.T."/>
            <person name="Levesque M.P."/>
            <person name="Cooper Z.A."/>
            <person name="Feng Y."/>
            <person name="Krepler C."/>
            <person name="Brill L."/>
            <person name="Samuels Y."/>
            <person name="Hayward N.K."/>
            <person name="Perlina A."/>
            <person name="Piris A."/>
            <person name="Zhang T."/>
            <person name="Halaban R."/>
            <person name="Herlyn M.M."/>
            <person name="Brown K.M."/>
            <person name="Wargo J.A."/>
            <person name="Dummer R."/>
            <person name="Flaherty K.T."/>
            <person name="Ronai Z.A."/>
        </authorList>
    </citation>
    <scope>FUNCTION</scope>
    <scope>INDUCTION</scope>
</reference>
<reference key="11">
    <citation type="journal article" date="2015" name="EMBO J.">
        <title>A non-canonical role of the p97 complex in RIG-I antiviral signaling.</title>
        <authorList>
            <person name="Hao Q."/>
            <person name="Jiao S."/>
            <person name="Shi Z."/>
            <person name="Li C."/>
            <person name="Meng X."/>
            <person name="Zhang Z."/>
            <person name="Wang Y."/>
            <person name="Song X."/>
            <person name="Wang W."/>
            <person name="Zhang R."/>
            <person name="Zhao Y."/>
            <person name="Wong C.C."/>
            <person name="Zhou Z."/>
        </authorList>
    </citation>
    <scope>FUNCTION</scope>
    <scope>CATALYTIC ACTIVITY</scope>
    <scope>INTERACTION WITH VCP</scope>
</reference>
<reference key="12">
    <citation type="journal article" date="2015" name="J. Immunol.">
        <title>MicroRNA-15b Modulates Japanese Encephalitis Virus-Mediated Inflammation via Targeting RNF125.</title>
        <authorList>
            <person name="Zhu B."/>
            <person name="Ye J."/>
            <person name="Nie Y."/>
            <person name="Ashraf U."/>
            <person name="Zohaib A."/>
            <person name="Duan X."/>
            <person name="Fu Z.F."/>
            <person name="Song Y."/>
            <person name="Chen H."/>
            <person name="Cao S."/>
        </authorList>
    </citation>
    <scope>INDUCTION</scope>
</reference>
<reference key="13">
    <citation type="journal article" date="2016" name="Sci. Rep.">
        <title>A C2HC zinc finger is essential for the RING-E2 interaction of the ubiquitin ligase RNF125.</title>
        <authorList>
            <person name="Bijlmakers M.J."/>
            <person name="Teixeira J.M."/>
            <person name="Boer R."/>
            <person name="Mayzel M."/>
            <person name="Puig-Sarries P."/>
            <person name="Karlsson G."/>
            <person name="Coll M."/>
            <person name="Pons M."/>
            <person name="Crosas B."/>
        </authorList>
    </citation>
    <scope>X-RAY CRYSTALLOGRAPHY (1.55 ANGSTROMS) IN COMPLEX WITH ZINC</scope>
    <scope>FUNCTION</scope>
    <scope>CATALYTIC ACTIVITY</scope>
    <scope>INTERACTION WITH UBE2D1</scope>
    <scope>DOMAIN</scope>
    <scope>MUTAGENESIS OF 100-CYS--CYS-103 AND 109-LEU--ARG-113</scope>
</reference>
<sequence>MGSVLSTDSGKSAPASATARALERRRDPELPVTSFDCAVCLEVLHQPVRTRCGHVFCRSCIATSLKNNKWTCPYCRAYLPSEGVPATDVAKRMKSEYKNCAECDTLVCLSEMRAHIRTCQKYIDKYGPLQELEETAARCVCPFCQRELYEDSLLDHCITHHRSERRPVFCPLCRLIPDENPSSFSGSLIRHLQVSHTLFYDDFIDFNIIEEALIRRVLDRSLLEYVNHSNTT</sequence>
<accession>Q96EQ8</accession>
<accession>Q9NX39</accession>
<comment type="function">
    <text evidence="5 6 7 10 11 13 14">E3 ubiquitin-protein ligase that mediates ubiquitination and subsequent proteasomal degradation of target proteins, such as RIGI, MAVS/IPS1, IFIH1/MDA5, JAK1 and p53/TP53 (PubMed:15843525, PubMed:17460044, PubMed:17643463, PubMed:25591766, PubMed:26027934, PubMed:26471729, PubMed:27411375). Acts as a negative regulator of type I interferon production by mediating ubiquitination of RIGI at 'Lys-181', leading to RIGI degradation (PubMed:17460044, PubMed:26471729). Mediates ubiquitination and subsequent degradation of p53/TP53 (PubMed:25591766). Mediates ubiquitination and subsequent degradation of JAK1 (PubMed:26027934). Acts as a positive regulator of T-cell activation (PubMed:15843525).</text>
</comment>
<comment type="catalytic activity">
    <reaction evidence="5 6 7 10 11 13 14">
        <text>S-ubiquitinyl-[E2 ubiquitin-conjugating enzyme]-L-cysteine + [acceptor protein]-L-lysine = [E2 ubiquitin-conjugating enzyme]-L-cysteine + N(6)-ubiquitinyl-[acceptor protein]-L-lysine.</text>
        <dbReference type="EC" id="2.3.2.27"/>
    </reaction>
</comment>
<comment type="pathway">
    <text evidence="5 6 7 10 11 13 14">Protein modification; protein ubiquitination.</text>
</comment>
<comment type="subunit">
    <text evidence="13 14">Interacts with UBE2D1 (PubMed:27411375). Interacts with VCP/p97; leading to recruit RNF125 to RIGI and promote ubiquitination of RIGI (PubMed:26471729).</text>
</comment>
<comment type="interaction">
    <interactant intactId="EBI-2339208">
        <id>Q96EQ8</id>
    </interactant>
    <interactant intactId="EBI-6115771">
        <id>Q9BYX4</id>
        <label>IFIH1</label>
    </interactant>
    <organismsDiffer>false</organismsDiffer>
    <experiments>2</experiments>
</comment>
<comment type="interaction">
    <interactant intactId="EBI-2339208">
        <id>Q96EQ8</id>
    </interactant>
    <interactant intactId="EBI-15577799">
        <id>Q7Z434-1</id>
        <label>MAVS</label>
    </interactant>
    <organismsDiffer>false</organismsDiffer>
    <experiments>2</experiments>
</comment>
<comment type="interaction">
    <interactant intactId="EBI-2339208">
        <id>Q96EQ8</id>
    </interactant>
    <interactant intactId="EBI-995350">
        <id>O95786</id>
        <label>RIGI</label>
    </interactant>
    <organismsDiffer>false</organismsDiffer>
    <experiments>4</experiments>
</comment>
<comment type="interaction">
    <interactant intactId="EBI-2339208">
        <id>Q96EQ8</id>
    </interactant>
    <interactant intactId="EBI-15577823">
        <id>O95786-1</id>
        <label>RIGI</label>
    </interactant>
    <organismsDiffer>false</organismsDiffer>
    <experiments>5</experiments>
</comment>
<comment type="interaction">
    <interactant intactId="EBI-2339208">
        <id>Q96EQ8</id>
    </interactant>
    <interactant intactId="EBI-2129763">
        <id>Q96LR5</id>
        <label>UBE2E2</label>
    </interactant>
    <organismsDiffer>false</organismsDiffer>
    <experiments>5</experiments>
</comment>
<comment type="interaction">
    <interactant intactId="EBI-2339208">
        <id>Q96EQ8</id>
    </interactant>
    <interactant intactId="EBI-355164">
        <id>P55072</id>
        <label>VCP</label>
    </interactant>
    <organismsDiffer>false</organismsDiffer>
    <experiments>3</experiments>
</comment>
<comment type="subcellular location">
    <subcellularLocation>
        <location evidence="8">Golgi apparatus membrane</location>
        <topology evidence="8">Lipid-anchor</topology>
    </subcellularLocation>
    <text evidence="8">Shows a reticular staining pattern within the cell and is probably expressed at other intracellular membranes in addition to the Golgi membrane. Not detected at the plasma membrane.</text>
</comment>
<comment type="tissue specificity">
    <text evidence="4 5">Predominantly expressed in lymphoid tissues, including bone marrow, spleen and thymus. Also weakly expressed in other tissues. Predominant in the CD4(+) and CD8(+) T-cells, suggesting that it is preferentially confined to T-cells.</text>
</comment>
<comment type="induction">
    <text evidence="11 12">Down-regulated by miR-15b (PubMed:26202983). Down-regulated in BRAFi resistant melanomas, leading to increased levels of JAK1 and possibly promoting BRAFi resistance.</text>
</comment>
<comment type="domain">
    <text evidence="14">The C2HC RNF-type zinc finger and the linker region stabilize the RING-type zinc finger, leading to promote binding of the RING-type zinc finger to the ubiquitin-conjugating enzyme E2 (donor ubiquitin) (PubMed:27411375).</text>
</comment>
<comment type="PTM">
    <text evidence="8">Autoubiquitinated, leading to its subsequent proteasomal degradation.</text>
</comment>
<comment type="disease" evidence="9">
    <disease id="DI-04352">
        <name>Tenorio syndrome</name>
        <acronym>TNORS</acronym>
        <description>A disease characterized by overgrowth, macrocephaly, and intellectual disability. Some patients may have mild hydrocephaly, hypoglycemia, and inflammatory diseases resembling Sjogren syndrome.</description>
        <dbReference type="MIM" id="616260"/>
    </disease>
    <text>The disease is caused by variants affecting the gene represented in this entry.</text>
</comment>
<keyword id="KW-0002">3D-structure</keyword>
<keyword id="KW-1064">Adaptive immunity</keyword>
<keyword id="KW-0225">Disease variant</keyword>
<keyword id="KW-0333">Golgi apparatus</keyword>
<keyword id="KW-0391">Immunity</keyword>
<keyword id="KW-0991">Intellectual disability</keyword>
<keyword id="KW-0449">Lipoprotein</keyword>
<keyword id="KW-0472">Membrane</keyword>
<keyword id="KW-0479">Metal-binding</keyword>
<keyword id="KW-0519">Myristate</keyword>
<keyword id="KW-1267">Proteomics identification</keyword>
<keyword id="KW-1185">Reference proteome</keyword>
<keyword id="KW-0808">Transferase</keyword>
<keyword id="KW-0832">Ubl conjugation</keyword>
<keyword id="KW-0833">Ubl conjugation pathway</keyword>
<keyword id="KW-0862">Zinc</keyword>
<keyword id="KW-0863">Zinc-finger</keyword>
<organism>
    <name type="scientific">Homo sapiens</name>
    <name type="common">Human</name>
    <dbReference type="NCBI Taxonomy" id="9606"/>
    <lineage>
        <taxon>Eukaryota</taxon>
        <taxon>Metazoa</taxon>
        <taxon>Chordata</taxon>
        <taxon>Craniata</taxon>
        <taxon>Vertebrata</taxon>
        <taxon>Euteleostomi</taxon>
        <taxon>Mammalia</taxon>
        <taxon>Eutheria</taxon>
        <taxon>Euarchontoglires</taxon>
        <taxon>Primates</taxon>
        <taxon>Haplorrhini</taxon>
        <taxon>Catarrhini</taxon>
        <taxon>Hominidae</taxon>
        <taxon>Homo</taxon>
    </lineage>
</organism>
<gene>
    <name evidence="18" type="primary">RNF125</name>
</gene>
<name>RN125_HUMAN</name>
<feature type="initiator methionine" description="Removed" evidence="8">
    <location>
        <position position="1"/>
    </location>
</feature>
<feature type="chain" id="PRO_0000056090" description="E3 ubiquitin-protein ligase RNF125">
    <location>
        <begin position="2"/>
        <end position="232"/>
    </location>
</feature>
<feature type="zinc finger region" description="RING-type" evidence="1">
    <location>
        <begin position="37"/>
        <end position="76"/>
    </location>
</feature>
<feature type="zinc finger region" description="C2HC RNF-type" evidence="2 16">
    <location>
        <begin position="100"/>
        <end position="119"/>
    </location>
</feature>
<feature type="region of interest" description="Disordered" evidence="3">
    <location>
        <begin position="1"/>
        <end position="23"/>
    </location>
</feature>
<feature type="region of interest" description="Interaction with the C2HC RNF-type zinc finger" evidence="14">
    <location>
        <begin position="43"/>
        <end position="45"/>
    </location>
</feature>
<feature type="region of interest" description="Interaction with the RING-type zinc finger" evidence="14">
    <location>
        <begin position="109"/>
        <end position="113"/>
    </location>
</feature>
<feature type="region of interest" description="Linker region" evidence="14">
    <location>
        <begin position="120"/>
        <end position="128"/>
    </location>
</feature>
<feature type="region of interest" description="Required for interaction with ubiquitin and for autoubiquitination" evidence="8">
    <location>
        <begin position="210"/>
        <end position="224"/>
    </location>
</feature>
<feature type="compositionally biased region" description="Polar residues" evidence="3">
    <location>
        <begin position="1"/>
        <end position="10"/>
    </location>
</feature>
<feature type="binding site" evidence="14 19">
    <location>
        <position position="37"/>
    </location>
    <ligand>
        <name>Zn(2+)</name>
        <dbReference type="ChEBI" id="CHEBI:29105"/>
        <label>1</label>
    </ligand>
</feature>
<feature type="binding site" evidence="14 19">
    <location>
        <position position="40"/>
    </location>
    <ligand>
        <name>Zn(2+)</name>
        <dbReference type="ChEBI" id="CHEBI:29105"/>
        <label>1</label>
    </ligand>
</feature>
<feature type="binding site" evidence="14 19">
    <location>
        <position position="52"/>
    </location>
    <ligand>
        <name>Zn(2+)</name>
        <dbReference type="ChEBI" id="CHEBI:29105"/>
        <label>2</label>
    </ligand>
</feature>
<feature type="binding site" evidence="14 19">
    <location>
        <position position="54"/>
    </location>
    <ligand>
        <name>Zn(2+)</name>
        <dbReference type="ChEBI" id="CHEBI:29105"/>
        <label>2</label>
    </ligand>
</feature>
<feature type="binding site" evidence="14 19">
    <location>
        <position position="57"/>
    </location>
    <ligand>
        <name>Zn(2+)</name>
        <dbReference type="ChEBI" id="CHEBI:29105"/>
        <label>1</label>
    </ligand>
</feature>
<feature type="binding site" evidence="14 19">
    <location>
        <position position="60"/>
    </location>
    <ligand>
        <name>Zn(2+)</name>
        <dbReference type="ChEBI" id="CHEBI:29105"/>
        <label>1</label>
    </ligand>
</feature>
<feature type="binding site" evidence="14 19">
    <location>
        <position position="72"/>
    </location>
    <ligand>
        <name>Zn(2+)</name>
        <dbReference type="ChEBI" id="CHEBI:29105"/>
        <label>2</label>
    </ligand>
</feature>
<feature type="binding site" evidence="14 19">
    <location>
        <position position="75"/>
    </location>
    <ligand>
        <name>Zn(2+)</name>
        <dbReference type="ChEBI" id="CHEBI:29105"/>
        <label>2</label>
    </ligand>
</feature>
<feature type="binding site" evidence="2 14 19">
    <location>
        <position position="100"/>
    </location>
    <ligand>
        <name>Zn(2+)</name>
        <dbReference type="ChEBI" id="CHEBI:29105"/>
        <label>3</label>
    </ligand>
</feature>
<feature type="binding site" evidence="2 14 19">
    <location>
        <position position="103"/>
    </location>
    <ligand>
        <name>Zn(2+)</name>
        <dbReference type="ChEBI" id="CHEBI:29105"/>
        <label>3</label>
    </ligand>
</feature>
<feature type="binding site" evidence="2 14 19">
    <location>
        <position position="115"/>
    </location>
    <ligand>
        <name>Zn(2+)</name>
        <dbReference type="ChEBI" id="CHEBI:29105"/>
        <label>3</label>
    </ligand>
</feature>
<feature type="binding site" evidence="2 14 19">
    <location>
        <position position="119"/>
    </location>
    <ligand>
        <name>Zn(2+)</name>
        <dbReference type="ChEBI" id="CHEBI:29105"/>
        <label>3</label>
    </ligand>
</feature>
<feature type="lipid moiety-binding region" description="N-myristoyl glycine" evidence="8">
    <location>
        <position position="2"/>
    </location>
</feature>
<feature type="sequence variant" id="VAR_073353" description="In TNORS; dbSNP:rs786201014." evidence="9">
    <original>M</original>
    <variation>I</variation>
    <location>
        <position position="112"/>
    </location>
</feature>
<feature type="sequence variant" id="VAR_073354" description="In TNORS; dbSNP:rs373764886." evidence="9">
    <original>S</original>
    <variation>L</variation>
    <location>
        <position position="163"/>
    </location>
</feature>
<feature type="sequence variant" id="VAR_073355" description="In TNORS; dbSNP:rs370242930." evidence="9">
    <original>R</original>
    <variation>C</variation>
    <location>
        <position position="174"/>
    </location>
</feature>
<feature type="mutagenesis site" description="Abolishes ability to regulate T-cell activation but not E3 ligase activity in vitro. Also abolishes myristoylation and membrane localization." evidence="5 7 8">
    <original>G</original>
    <variation>A</variation>
    <location>
        <position position="2"/>
    </location>
</feature>
<feature type="mutagenesis site" description="Abolishes ability to regulate T-cell activation and E3 ligase activity in vitro; when associated with A-40." evidence="5 7 8">
    <original>C</original>
    <variation>A</variation>
    <location>
        <position position="37"/>
    </location>
</feature>
<feature type="mutagenesis site" description="Abolishes ability to regulate T-cell activation and E3 ligase activity in vitro; when associated with A-37." evidence="5 8">
    <original>C</original>
    <variation>A</variation>
    <location>
        <position position="40"/>
    </location>
</feature>
<feature type="mutagenesis site" description="Abolishes ability to regulate T-cell activation and E3 ligase activity in vitro; when associated with A-57." evidence="5">
    <original>H</original>
    <variation>A</variation>
    <location>
        <position position="54"/>
    </location>
</feature>
<feature type="mutagenesis site" description="Abolishes ability to regulate T-cell activation and E3 ligase activity in vitro; when associated with A-54." evidence="5">
    <original>C</original>
    <variation>A</variation>
    <location>
        <position position="57"/>
    </location>
</feature>
<feature type="mutagenesis site" description="Abolishes ability to regulate T-cell activation and E3 ligase activity in vitro; when associated with A-75." evidence="5 6 10">
    <original>C</original>
    <variation>A</variation>
    <location>
        <position position="72"/>
    </location>
</feature>
<feature type="mutagenesis site" description="Abolishes ability to regulate T-cell activation and E3 ligase activity in vitro; when associated with A-72." evidence="5 6 10">
    <original>C</original>
    <variation>A</variation>
    <location>
        <position position="75"/>
    </location>
</feature>
<feature type="mutagenesis site" description="Abolished E3 ubiquitin-protein ligase activity in vitro." evidence="14">
    <original>CAEC</original>
    <variation>AAEA</variation>
    <location>
        <begin position="100"/>
        <end position="103"/>
    </location>
</feature>
<feature type="mutagenesis site" description="Abolished E3 ubiquitin-protein ligase activity in vitro." evidence="14">
    <original>LSEMR</original>
    <variation>ASEAA</variation>
    <location>
        <begin position="109"/>
        <end position="113"/>
    </location>
</feature>
<feature type="mutagenesis site" description="Reduced ubiquitination and reduced binding to ubiquitinated proteins; when associated with Q-221." evidence="8">
    <original>V</original>
    <variation>P</variation>
    <location>
        <position position="217"/>
    </location>
</feature>
<feature type="mutagenesis site" description="Reduced ubiquitination and reduced binding to ubiquitinated proteins; when associated with P-217." evidence="8">
    <original>S</original>
    <variation>Q</variation>
    <location>
        <position position="221"/>
    </location>
</feature>
<feature type="sequence conflict" description="In Ref. 2; AAH12021." evidence="17" ref="2">
    <original>TLVC</original>
    <variation>IVLY</variation>
    <location>
        <begin position="105"/>
        <end position="108"/>
    </location>
</feature>
<feature type="sequence conflict" description="In Ref. 1; BAA91182." evidence="17" ref="1">
    <original>S</original>
    <variation>N</variation>
    <location>
        <position position="187"/>
    </location>
</feature>
<feature type="sequence conflict" description="In Ref. 2; AAH12021." evidence="17" ref="2">
    <original>T</original>
    <variation>A</variation>
    <location>
        <position position="232"/>
    </location>
</feature>
<feature type="turn" evidence="20">
    <location>
        <begin position="38"/>
        <end position="40"/>
    </location>
</feature>
<feature type="strand" evidence="20">
    <location>
        <begin position="45"/>
        <end position="49"/>
    </location>
</feature>
<feature type="strand" evidence="20">
    <location>
        <begin position="55"/>
        <end position="57"/>
    </location>
</feature>
<feature type="helix" evidence="20">
    <location>
        <begin position="58"/>
        <end position="67"/>
    </location>
</feature>
<feature type="turn" evidence="20">
    <location>
        <begin position="73"/>
        <end position="75"/>
    </location>
</feature>
<feature type="strand" evidence="20">
    <location>
        <begin position="80"/>
        <end position="82"/>
    </location>
</feature>
<feature type="helix" evidence="20">
    <location>
        <begin position="87"/>
        <end position="93"/>
    </location>
</feature>
<feature type="strand" evidence="20">
    <location>
        <begin position="97"/>
        <end position="99"/>
    </location>
</feature>
<feature type="turn" evidence="20">
    <location>
        <begin position="101"/>
        <end position="103"/>
    </location>
</feature>
<feature type="strand" evidence="20">
    <location>
        <begin position="106"/>
        <end position="108"/>
    </location>
</feature>
<feature type="helix" evidence="20">
    <location>
        <begin position="109"/>
        <end position="111"/>
    </location>
</feature>
<feature type="helix" evidence="20">
    <location>
        <begin position="112"/>
        <end position="118"/>
    </location>
</feature>
<feature type="helix" evidence="20">
    <location>
        <begin position="120"/>
        <end position="126"/>
    </location>
</feature>